<evidence type="ECO:0000255" key="1">
    <source>
        <dbReference type="HAMAP-Rule" id="MF_00525"/>
    </source>
</evidence>
<comment type="function">
    <text evidence="1">Major determinant of cell surface composition. Negatively regulates motility, adhesion and synthesis of biofilm exopolysaccharides.</text>
</comment>
<comment type="similarity">
    <text evidence="1">Belongs to the GlgS family.</text>
</comment>
<sequence>MDHSLNSLNNFDFLARSFARMHAEGRPVDILAVTGNMDEEHRTWFCARYAWYCQQMMQTRELELEH</sequence>
<protein>
    <recommendedName>
        <fullName evidence="1">Surface composition regulator</fullName>
    </recommendedName>
</protein>
<feature type="chain" id="PRO_1000146257" description="Surface composition regulator">
    <location>
        <begin position="1"/>
        <end position="66"/>
    </location>
</feature>
<accession>B7N052</accession>
<dbReference type="EMBL" id="CU928162">
    <property type="protein sequence ID" value="CAR09720.1"/>
    <property type="molecule type" value="Genomic_DNA"/>
</dbReference>
<dbReference type="RefSeq" id="WP_001296424.1">
    <property type="nucleotide sequence ID" value="NC_011745.1"/>
</dbReference>
<dbReference type="SMR" id="B7N052"/>
<dbReference type="GeneID" id="75173169"/>
<dbReference type="KEGG" id="ecq:ECED1_3717"/>
<dbReference type="HOGENOM" id="CLU_185971_0_0_6"/>
<dbReference type="Proteomes" id="UP000000748">
    <property type="component" value="Chromosome"/>
</dbReference>
<dbReference type="GO" id="GO:1902201">
    <property type="term" value="P:negative regulation of bacterial-type flagellum-dependent cell motility"/>
    <property type="evidence" value="ECO:0007669"/>
    <property type="project" value="UniProtKB-UniRule"/>
</dbReference>
<dbReference type="GO" id="GO:1900191">
    <property type="term" value="P:negative regulation of single-species biofilm formation"/>
    <property type="evidence" value="ECO:0007669"/>
    <property type="project" value="UniProtKB-UniRule"/>
</dbReference>
<dbReference type="FunFam" id="1.20.970.20:FF:000001">
    <property type="entry name" value="Surface composition regulator"/>
    <property type="match status" value="1"/>
</dbReference>
<dbReference type="Gene3D" id="1.20.970.20">
    <property type="entry name" value="Glycogen synthesis protein GlgS"/>
    <property type="match status" value="1"/>
</dbReference>
<dbReference type="HAMAP" id="MF_00525">
    <property type="entry name" value="GlgS"/>
    <property type="match status" value="1"/>
</dbReference>
<dbReference type="InterPro" id="IPR015065">
    <property type="entry name" value="GlgS"/>
</dbReference>
<dbReference type="InterPro" id="IPR036295">
    <property type="entry name" value="GlgS_sf"/>
</dbReference>
<dbReference type="NCBIfam" id="NF002793">
    <property type="entry name" value="PRK02922.1"/>
    <property type="match status" value="1"/>
</dbReference>
<dbReference type="Pfam" id="PF08971">
    <property type="entry name" value="GlgS"/>
    <property type="match status" value="1"/>
</dbReference>
<dbReference type="SUPFAM" id="SSF109747">
    <property type="entry name" value="Glycogen synthesis protein GlgS"/>
    <property type="match status" value="1"/>
</dbReference>
<organism>
    <name type="scientific">Escherichia coli O81 (strain ED1a)</name>
    <dbReference type="NCBI Taxonomy" id="585397"/>
    <lineage>
        <taxon>Bacteria</taxon>
        <taxon>Pseudomonadati</taxon>
        <taxon>Pseudomonadota</taxon>
        <taxon>Gammaproteobacteria</taxon>
        <taxon>Enterobacterales</taxon>
        <taxon>Enterobacteriaceae</taxon>
        <taxon>Escherichia</taxon>
    </lineage>
</organism>
<name>GLGS_ECO81</name>
<gene>
    <name evidence="1" type="primary">glgS</name>
    <name type="ordered locus">ECED1_3717</name>
</gene>
<reference key="1">
    <citation type="journal article" date="2009" name="PLoS Genet.">
        <title>Organised genome dynamics in the Escherichia coli species results in highly diverse adaptive paths.</title>
        <authorList>
            <person name="Touchon M."/>
            <person name="Hoede C."/>
            <person name="Tenaillon O."/>
            <person name="Barbe V."/>
            <person name="Baeriswyl S."/>
            <person name="Bidet P."/>
            <person name="Bingen E."/>
            <person name="Bonacorsi S."/>
            <person name="Bouchier C."/>
            <person name="Bouvet O."/>
            <person name="Calteau A."/>
            <person name="Chiapello H."/>
            <person name="Clermont O."/>
            <person name="Cruveiller S."/>
            <person name="Danchin A."/>
            <person name="Diard M."/>
            <person name="Dossat C."/>
            <person name="Karoui M.E."/>
            <person name="Frapy E."/>
            <person name="Garry L."/>
            <person name="Ghigo J.M."/>
            <person name="Gilles A.M."/>
            <person name="Johnson J."/>
            <person name="Le Bouguenec C."/>
            <person name="Lescat M."/>
            <person name="Mangenot S."/>
            <person name="Martinez-Jehanne V."/>
            <person name="Matic I."/>
            <person name="Nassif X."/>
            <person name="Oztas S."/>
            <person name="Petit M.A."/>
            <person name="Pichon C."/>
            <person name="Rouy Z."/>
            <person name="Ruf C.S."/>
            <person name="Schneider D."/>
            <person name="Tourret J."/>
            <person name="Vacherie B."/>
            <person name="Vallenet D."/>
            <person name="Medigue C."/>
            <person name="Rocha E.P.C."/>
            <person name="Denamur E."/>
        </authorList>
    </citation>
    <scope>NUCLEOTIDE SEQUENCE [LARGE SCALE GENOMIC DNA]</scope>
    <source>
        <strain>ED1a</strain>
    </source>
</reference>
<proteinExistence type="inferred from homology"/>